<comment type="function">
    <text evidence="1">Catalyzes the irreversible cleavage of the glycosidic bond in both 5'-methylthioadenosine (MTA) and S-adenosylhomocysteine (SAH/AdoHcy) to adenine and the corresponding thioribose, 5'-methylthioribose and S-ribosylhomocysteine, respectively. Also cleaves 5'-deoxyadenosine, a toxic by-product of radical S-adenosylmethionine (SAM) enzymes, into 5-deoxyribose and adenine.</text>
</comment>
<comment type="catalytic activity">
    <reaction evidence="1">
        <text>S-adenosyl-L-homocysteine + H2O = S-(5-deoxy-D-ribos-5-yl)-L-homocysteine + adenine</text>
        <dbReference type="Rhea" id="RHEA:17805"/>
        <dbReference type="ChEBI" id="CHEBI:15377"/>
        <dbReference type="ChEBI" id="CHEBI:16708"/>
        <dbReference type="ChEBI" id="CHEBI:57856"/>
        <dbReference type="ChEBI" id="CHEBI:58195"/>
        <dbReference type="EC" id="3.2.2.9"/>
    </reaction>
</comment>
<comment type="catalytic activity">
    <reaction evidence="1">
        <text>S-methyl-5'-thioadenosine + H2O = 5-(methylsulfanyl)-D-ribose + adenine</text>
        <dbReference type="Rhea" id="RHEA:13617"/>
        <dbReference type="ChEBI" id="CHEBI:15377"/>
        <dbReference type="ChEBI" id="CHEBI:16708"/>
        <dbReference type="ChEBI" id="CHEBI:17509"/>
        <dbReference type="ChEBI" id="CHEBI:78440"/>
        <dbReference type="EC" id="3.2.2.9"/>
    </reaction>
</comment>
<comment type="catalytic activity">
    <reaction evidence="1">
        <text>5'-deoxyadenosine + H2O = 5-deoxy-D-ribose + adenine</text>
        <dbReference type="Rhea" id="RHEA:29859"/>
        <dbReference type="ChEBI" id="CHEBI:15377"/>
        <dbReference type="ChEBI" id="CHEBI:16708"/>
        <dbReference type="ChEBI" id="CHEBI:17319"/>
        <dbReference type="ChEBI" id="CHEBI:149540"/>
        <dbReference type="EC" id="3.2.2.9"/>
    </reaction>
    <physiologicalReaction direction="left-to-right" evidence="1">
        <dbReference type="Rhea" id="RHEA:29860"/>
    </physiologicalReaction>
</comment>
<comment type="pathway">
    <text evidence="1">Amino-acid biosynthesis; L-methionine biosynthesis via salvage pathway; S-methyl-5-thio-alpha-D-ribose 1-phosphate from S-methyl-5'-thioadenosine (hydrolase route): step 1/2.</text>
</comment>
<comment type="similarity">
    <text evidence="1">Belongs to the PNP/UDP phosphorylase family. MtnN subfamily.</text>
</comment>
<dbReference type="EC" id="3.2.2.9" evidence="1"/>
<dbReference type="EMBL" id="CP001649">
    <property type="protein sequence ID" value="ACS81796.1"/>
    <property type="molecule type" value="Genomic_DNA"/>
</dbReference>
<dbReference type="RefSeq" id="WP_015853612.1">
    <property type="nucleotide sequence ID" value="NC_012881.1"/>
</dbReference>
<dbReference type="SMR" id="C6BU87"/>
<dbReference type="STRING" id="526222.Desal_3751"/>
<dbReference type="KEGG" id="dsa:Desal_3751"/>
<dbReference type="eggNOG" id="COG0775">
    <property type="taxonomic scope" value="Bacteria"/>
</dbReference>
<dbReference type="HOGENOM" id="CLU_031248_2_2_7"/>
<dbReference type="OrthoDB" id="9792278at2"/>
<dbReference type="UniPathway" id="UPA00904">
    <property type="reaction ID" value="UER00871"/>
</dbReference>
<dbReference type="Proteomes" id="UP000002601">
    <property type="component" value="Chromosome"/>
</dbReference>
<dbReference type="GO" id="GO:0005829">
    <property type="term" value="C:cytosol"/>
    <property type="evidence" value="ECO:0007669"/>
    <property type="project" value="TreeGrafter"/>
</dbReference>
<dbReference type="GO" id="GO:0008782">
    <property type="term" value="F:adenosylhomocysteine nucleosidase activity"/>
    <property type="evidence" value="ECO:0007669"/>
    <property type="project" value="UniProtKB-UniRule"/>
</dbReference>
<dbReference type="GO" id="GO:0008930">
    <property type="term" value="F:methylthioadenosine nucleosidase activity"/>
    <property type="evidence" value="ECO:0007669"/>
    <property type="project" value="UniProtKB-UniRule"/>
</dbReference>
<dbReference type="GO" id="GO:0019509">
    <property type="term" value="P:L-methionine salvage from methylthioadenosine"/>
    <property type="evidence" value="ECO:0007669"/>
    <property type="project" value="UniProtKB-UniRule"/>
</dbReference>
<dbReference type="GO" id="GO:0019284">
    <property type="term" value="P:L-methionine salvage from S-adenosylmethionine"/>
    <property type="evidence" value="ECO:0007669"/>
    <property type="project" value="TreeGrafter"/>
</dbReference>
<dbReference type="GO" id="GO:0009164">
    <property type="term" value="P:nucleoside catabolic process"/>
    <property type="evidence" value="ECO:0007669"/>
    <property type="project" value="InterPro"/>
</dbReference>
<dbReference type="CDD" id="cd09008">
    <property type="entry name" value="MTAN"/>
    <property type="match status" value="1"/>
</dbReference>
<dbReference type="FunFam" id="3.40.50.1580:FF:000001">
    <property type="entry name" value="MTA/SAH nucleosidase family protein"/>
    <property type="match status" value="1"/>
</dbReference>
<dbReference type="Gene3D" id="3.40.50.1580">
    <property type="entry name" value="Nucleoside phosphorylase domain"/>
    <property type="match status" value="1"/>
</dbReference>
<dbReference type="HAMAP" id="MF_01684">
    <property type="entry name" value="Salvage_MtnN"/>
    <property type="match status" value="1"/>
</dbReference>
<dbReference type="InterPro" id="IPR010049">
    <property type="entry name" value="MTA_SAH_Nsdase"/>
</dbReference>
<dbReference type="InterPro" id="IPR000845">
    <property type="entry name" value="Nucleoside_phosphorylase_d"/>
</dbReference>
<dbReference type="InterPro" id="IPR035994">
    <property type="entry name" value="Nucleoside_phosphorylase_sf"/>
</dbReference>
<dbReference type="NCBIfam" id="TIGR01704">
    <property type="entry name" value="MTA_SAH-Nsdase"/>
    <property type="match status" value="1"/>
</dbReference>
<dbReference type="NCBIfam" id="NF004079">
    <property type="entry name" value="PRK05584.1"/>
    <property type="match status" value="1"/>
</dbReference>
<dbReference type="PANTHER" id="PTHR46832">
    <property type="entry name" value="5'-METHYLTHIOADENOSINE/S-ADENOSYLHOMOCYSTEINE NUCLEOSIDASE"/>
    <property type="match status" value="1"/>
</dbReference>
<dbReference type="PANTHER" id="PTHR46832:SF1">
    <property type="entry name" value="5'-METHYLTHIOADENOSINE_S-ADENOSYLHOMOCYSTEINE NUCLEOSIDASE"/>
    <property type="match status" value="1"/>
</dbReference>
<dbReference type="Pfam" id="PF01048">
    <property type="entry name" value="PNP_UDP_1"/>
    <property type="match status" value="1"/>
</dbReference>
<dbReference type="SUPFAM" id="SSF53167">
    <property type="entry name" value="Purine and uridine phosphorylases"/>
    <property type="match status" value="1"/>
</dbReference>
<keyword id="KW-0028">Amino-acid biosynthesis</keyword>
<keyword id="KW-0378">Hydrolase</keyword>
<keyword id="KW-0486">Methionine biosynthesis</keyword>
<keyword id="KW-1185">Reference proteome</keyword>
<accession>C6BU87</accession>
<feature type="chain" id="PRO_1000215908" description="5'-methylthioadenosine/S-adenosylhomocysteine nucleosidase">
    <location>
        <begin position="1"/>
        <end position="231"/>
    </location>
</feature>
<feature type="active site" description="Proton acceptor" evidence="1">
    <location>
        <position position="12"/>
    </location>
</feature>
<feature type="active site" description="Proton donor" evidence="1">
    <location>
        <position position="198"/>
    </location>
</feature>
<feature type="binding site" evidence="1">
    <location>
        <position position="78"/>
    </location>
    <ligand>
        <name>substrate</name>
    </ligand>
</feature>
<feature type="binding site" evidence="1">
    <location>
        <position position="153"/>
    </location>
    <ligand>
        <name>substrate</name>
    </ligand>
</feature>
<feature type="binding site" evidence="1">
    <location>
        <begin position="174"/>
        <end position="175"/>
    </location>
    <ligand>
        <name>substrate</name>
    </ligand>
</feature>
<reference key="1">
    <citation type="submission" date="2009-06" db="EMBL/GenBank/DDBJ databases">
        <title>Complete sequence of Desulfovibrio salexigens DSM 2638.</title>
        <authorList>
            <consortium name="US DOE Joint Genome Institute"/>
            <person name="Lucas S."/>
            <person name="Copeland A."/>
            <person name="Lapidus A."/>
            <person name="Glavina del Rio T."/>
            <person name="Tice H."/>
            <person name="Bruce D."/>
            <person name="Goodwin L."/>
            <person name="Pitluck S."/>
            <person name="Munk A.C."/>
            <person name="Brettin T."/>
            <person name="Detter J.C."/>
            <person name="Han C."/>
            <person name="Tapia R."/>
            <person name="Larimer F."/>
            <person name="Land M."/>
            <person name="Hauser L."/>
            <person name="Kyrpides N."/>
            <person name="Anderson I."/>
            <person name="Wall J.D."/>
            <person name="Arkin A.P."/>
            <person name="Dehal P."/>
            <person name="Chivian D."/>
            <person name="Giles B."/>
            <person name="Hazen T.C."/>
        </authorList>
    </citation>
    <scope>NUCLEOTIDE SEQUENCE [LARGE SCALE GENOMIC DNA]</scope>
    <source>
        <strain>ATCC 14822 / DSM 2638 / NCIMB 8403 / VKM B-1763</strain>
    </source>
</reference>
<protein>
    <recommendedName>
        <fullName evidence="1">5'-methylthioadenosine/S-adenosylhomocysteine nucleosidase</fullName>
        <shortName evidence="1">MTA/SAH nucleosidase</shortName>
        <shortName evidence="1">MTAN</shortName>
        <ecNumber evidence="1">3.2.2.9</ecNumber>
    </recommendedName>
    <alternativeName>
        <fullName evidence="1">5'-deoxyadenosine nucleosidase</fullName>
        <shortName evidence="1">DOA nucleosidase</shortName>
        <shortName evidence="1">dAdo nucleosidase</shortName>
    </alternativeName>
    <alternativeName>
        <fullName evidence="1">5'-methylthioadenosine nucleosidase</fullName>
        <shortName evidence="1">MTA nucleosidase</shortName>
    </alternativeName>
    <alternativeName>
        <fullName evidence="1">S-adenosylhomocysteine nucleosidase</fullName>
        <shortName evidence="1">AdoHcy nucleosidase</shortName>
        <shortName evidence="1">SAH nucleosidase</shortName>
        <shortName evidence="1">SRH nucleosidase</shortName>
    </alternativeName>
</protein>
<organism>
    <name type="scientific">Maridesulfovibrio salexigens (strain ATCC 14822 / DSM 2638 / NCIMB 8403 / VKM B-1763)</name>
    <name type="common">Desulfovibrio salexigens</name>
    <dbReference type="NCBI Taxonomy" id="526222"/>
    <lineage>
        <taxon>Bacteria</taxon>
        <taxon>Pseudomonadati</taxon>
        <taxon>Thermodesulfobacteriota</taxon>
        <taxon>Desulfovibrionia</taxon>
        <taxon>Desulfovibrionales</taxon>
        <taxon>Desulfovibrionaceae</taxon>
        <taxon>Maridesulfovibrio</taxon>
    </lineage>
</organism>
<gene>
    <name evidence="1" type="primary">mtnN</name>
    <name type="ordered locus">Desal_3751</name>
</gene>
<name>MTNN_MARSD</name>
<evidence type="ECO:0000255" key="1">
    <source>
        <dbReference type="HAMAP-Rule" id="MF_01684"/>
    </source>
</evidence>
<sequence length="231" mass="25121">MKIGIIAAMEEELVLLVNKLDEPKTENFGQFTYHTGRINGVEVALFLCGIGKVNAAVGATLLLDKFKPDYLINTGVAGAFPGNINIGDIVVSSEVRHYDADATAFDYEMGQIPQMPAAYQADKLLLGLAKKAWINEDSISVHQGPVLSGDSFIHTPQQISQIEQKFPDVMAVEMEGAAIAQTGFLFNVPFILIRSISDKVHEDGSSAIYEQSMEKAAANSVRMVLSMLKEL</sequence>
<proteinExistence type="inferred from homology"/>